<dbReference type="EC" id="1.14.14.132" evidence="3"/>
<dbReference type="EMBL" id="KT390182">
    <property type="protein sequence ID" value="ALG05144.1"/>
    <property type="molecule type" value="mRNA"/>
</dbReference>
<dbReference type="SMR" id="A0A0N7F297"/>
<dbReference type="KEGG" id="ag:ALG05144"/>
<dbReference type="BRENDA" id="1.14.14.132">
    <property type="organism ID" value="4928"/>
</dbReference>
<dbReference type="UniPathway" id="UPA00711"/>
<dbReference type="GO" id="GO:0016020">
    <property type="term" value="C:membrane"/>
    <property type="evidence" value="ECO:0007669"/>
    <property type="project" value="UniProtKB-SubCell"/>
</dbReference>
<dbReference type="GO" id="GO:0020037">
    <property type="term" value="F:heme binding"/>
    <property type="evidence" value="ECO:0007669"/>
    <property type="project" value="InterPro"/>
</dbReference>
<dbReference type="GO" id="GO:0005506">
    <property type="term" value="F:iron ion binding"/>
    <property type="evidence" value="ECO:0007669"/>
    <property type="project" value="InterPro"/>
</dbReference>
<dbReference type="GO" id="GO:0004497">
    <property type="term" value="F:monooxygenase activity"/>
    <property type="evidence" value="ECO:0007669"/>
    <property type="project" value="UniProtKB-KW"/>
</dbReference>
<dbReference type="GO" id="GO:0016705">
    <property type="term" value="F:oxidoreductase activity, acting on paired donors, with incorporation or reduction of molecular oxygen"/>
    <property type="evidence" value="ECO:0000314"/>
    <property type="project" value="UniProtKB"/>
</dbReference>
<dbReference type="GO" id="GO:0009699">
    <property type="term" value="P:phenylpropanoid biosynthetic process"/>
    <property type="evidence" value="ECO:0000314"/>
    <property type="project" value="UniProtKB"/>
</dbReference>
<dbReference type="CDD" id="cd20654">
    <property type="entry name" value="CYP82"/>
    <property type="match status" value="1"/>
</dbReference>
<dbReference type="FunFam" id="1.10.630.10:FF:000026">
    <property type="entry name" value="Cytochrome P450 82C4"/>
    <property type="match status" value="1"/>
</dbReference>
<dbReference type="Gene3D" id="1.10.630.10">
    <property type="entry name" value="Cytochrome P450"/>
    <property type="match status" value="1"/>
</dbReference>
<dbReference type="InterPro" id="IPR001128">
    <property type="entry name" value="Cyt_P450"/>
</dbReference>
<dbReference type="InterPro" id="IPR017972">
    <property type="entry name" value="Cyt_P450_CS"/>
</dbReference>
<dbReference type="InterPro" id="IPR002401">
    <property type="entry name" value="Cyt_P450_E_grp-I"/>
</dbReference>
<dbReference type="InterPro" id="IPR036396">
    <property type="entry name" value="Cyt_P450_sf"/>
</dbReference>
<dbReference type="InterPro" id="IPR050651">
    <property type="entry name" value="Plant_Cytochrome_P450_Monoox"/>
</dbReference>
<dbReference type="PANTHER" id="PTHR47947:SF26">
    <property type="entry name" value="CYTOCHROME P450"/>
    <property type="match status" value="1"/>
</dbReference>
<dbReference type="PANTHER" id="PTHR47947">
    <property type="entry name" value="CYTOCHROME P450 82C3-RELATED"/>
    <property type="match status" value="1"/>
</dbReference>
<dbReference type="Pfam" id="PF00067">
    <property type="entry name" value="p450"/>
    <property type="match status" value="1"/>
</dbReference>
<dbReference type="PRINTS" id="PR00463">
    <property type="entry name" value="EP450I"/>
</dbReference>
<dbReference type="PRINTS" id="PR00385">
    <property type="entry name" value="P450"/>
</dbReference>
<dbReference type="SUPFAM" id="SSF48264">
    <property type="entry name" value="Cytochrome P450"/>
    <property type="match status" value="1"/>
</dbReference>
<dbReference type="PROSITE" id="PS00086">
    <property type="entry name" value="CYTOCHROME_P450"/>
    <property type="match status" value="1"/>
</dbReference>
<feature type="chain" id="PRO_0000451903" description="Demethylepipodophyllotoxin synthase">
    <location>
        <begin position="1"/>
        <end position="519"/>
    </location>
</feature>
<feature type="transmembrane region" description="Helical" evidence="2">
    <location>
        <begin position="6"/>
        <end position="26"/>
    </location>
</feature>
<feature type="binding site" description="axial binding residue" evidence="1">
    <location>
        <position position="458"/>
    </location>
    <ligand>
        <name>heme</name>
        <dbReference type="ChEBI" id="CHEBI:30413"/>
    </ligand>
    <ligandPart>
        <name>Fe</name>
        <dbReference type="ChEBI" id="CHEBI:18248"/>
    </ligandPart>
</feature>
<organism>
    <name type="scientific">Sinopodophyllum hexandrum</name>
    <name type="common">Himalayan may apple</name>
    <name type="synonym">Podophyllum hexandrum</name>
    <dbReference type="NCBI Taxonomy" id="93608"/>
    <lineage>
        <taxon>Eukaryota</taxon>
        <taxon>Viridiplantae</taxon>
        <taxon>Streptophyta</taxon>
        <taxon>Embryophyta</taxon>
        <taxon>Tracheophyta</taxon>
        <taxon>Spermatophyta</taxon>
        <taxon>Magnoliopsida</taxon>
        <taxon>Ranunculales</taxon>
        <taxon>Berberidaceae</taxon>
        <taxon>Podophylloideae</taxon>
        <taxon>Podophylleae</taxon>
        <taxon>Sinopodophyllum</taxon>
    </lineage>
</organism>
<sequence>MDSLHCLETLLLGFFVLLPCFFYFVWKKPNNKIKEPPQPAGAWPIIGHLHLLARGDLPHKILSSFADKNGPVFKIQLGVHQALVVNNSEIAKECFTTNDRFFLNRPSGVAAKIMGYNYVMLGVAPYGPYWRDMRKIIMLEFLSNRRLQSLKHVWHSEISISSKELYKLWETQNIDFCLVDMKQWLADLTLNMSVKMVVGKRFFGSASASACEETESSNCPKTLRNMFRLMGSFVLSDYLPYLRWLDLGGHEKEMKRTVKELDILFKGWLDEHKRKRLSGGKEDDDQDFMDVMLSILEESKLGNDVDTINKTACLAIILGGADTTWATLTWALSLLLNNPNALKKAQDELDLHVGRDRNVDESDLVKLTYIDAIIKETLRLYPPGPLLGPRVVTEDCTIAGYHVRAGTRLIVNAWKIQRDPLVWSQPHEYQPERFLERDVDMKGQHFELIPFGSGRRACPAISLALQVLPLTLAHILHGFELRTPNQNKVDMTETPGIVHAKATPLEVLVAPRISPKCFV</sequence>
<proteinExistence type="evidence at protein level"/>
<keyword id="KW-0349">Heme</keyword>
<keyword id="KW-0408">Iron</keyword>
<keyword id="KW-0472">Membrane</keyword>
<keyword id="KW-0479">Metal-binding</keyword>
<keyword id="KW-0503">Monooxygenase</keyword>
<keyword id="KW-0560">Oxidoreductase</keyword>
<keyword id="KW-0812">Transmembrane</keyword>
<keyword id="KW-1133">Transmembrane helix</keyword>
<protein>
    <recommendedName>
        <fullName evidence="4">Demethylepipodophyllotoxin synthase</fullName>
        <ecNumber evidence="3">1.14.14.132</ecNumber>
    </recommendedName>
    <alternativeName>
        <fullName evidence="4">Cytochrome P450 family 82 subfamily D polypeptide 61</fullName>
    </alternativeName>
</protein>
<gene>
    <name evidence="4" type="primary">CYP82D61</name>
</gene>
<reference key="1">
    <citation type="journal article" date="2015" name="Science">
        <title>Six enzymes from mayapple that complete the biosynthetic pathway to the etoposide aglycone.</title>
        <authorList>
            <person name="Lau W."/>
            <person name="Sattely E.S."/>
        </authorList>
    </citation>
    <scope>NUCLEOTIDE SEQUENCE [MRNA]</scope>
    <scope>FUNCTION</scope>
    <scope>CATALYTIC ACTIVITY</scope>
    <scope>BIOTECHNOLOGY</scope>
    <scope>TISSUE SPECIFICITY</scope>
    <scope>PATHWAY</scope>
</reference>
<name>C82D6_SINHE</name>
<comment type="function">
    <text evidence="3">Cytochrome P450 involved in the biosynthesis of etoposide, a chemotherapeutic compound of the topoisomerase inhibitor family (PubMed:26359402). Catalyzes the hydroxylation of deoxypodophyllotoxin to form epipodophyllotoxin (PubMed:26359402).</text>
</comment>
<comment type="catalytic activity">
    <reaction evidence="3">
        <text>(-)-4'-desmethyl-deoxypodophyllotoxin + reduced [NADPH--hemoprotein reductase] + O2 = 4'-demethylepipodophyllotoxin + oxidized [NADPH--hemoprotein reductase] + H2O + H(+)</text>
        <dbReference type="Rhea" id="RHEA:49032"/>
        <dbReference type="Rhea" id="RHEA-COMP:11964"/>
        <dbReference type="Rhea" id="RHEA-COMP:11965"/>
        <dbReference type="ChEBI" id="CHEBI:1729"/>
        <dbReference type="ChEBI" id="CHEBI:15377"/>
        <dbReference type="ChEBI" id="CHEBI:15378"/>
        <dbReference type="ChEBI" id="CHEBI:15379"/>
        <dbReference type="ChEBI" id="CHEBI:57618"/>
        <dbReference type="ChEBI" id="CHEBI:58210"/>
        <dbReference type="ChEBI" id="CHEBI:74422"/>
        <dbReference type="EC" id="1.14.14.132"/>
    </reaction>
    <physiologicalReaction direction="left-to-right" evidence="3">
        <dbReference type="Rhea" id="RHEA:49033"/>
    </physiologicalReaction>
</comment>
<comment type="cofactor">
    <cofactor evidence="1">
        <name>heme</name>
        <dbReference type="ChEBI" id="CHEBI:30413"/>
    </cofactor>
</comment>
<comment type="pathway">
    <text evidence="3">Aromatic compound metabolism; phenylpropanoid biosynthesis.</text>
</comment>
<comment type="subcellular location">
    <subcellularLocation>
        <location evidence="2">Membrane</location>
        <topology evidence="2">Single-pass membrane protein</topology>
    </subcellularLocation>
</comment>
<comment type="tissue specificity">
    <text evidence="3">Rhizome-specific expression.</text>
</comment>
<comment type="biotechnology">
    <text evidence="6">Combinatorially expression of Sinopodophyllum hexandrum (mayapple) genes of the podophyllotoxin pathway (e.g. DIR, PLR, SDH, CYP719A23, OMT3, CYP71CU1, OMT1, 2-ODD, CYP71BE54 and CYP82D61) in Nicotiana benthamiana (tobacco) results in the production of the chemotherapeutic compound etoposide.</text>
</comment>
<comment type="similarity">
    <text evidence="5">Belongs to the cytochrome P450 family.</text>
</comment>
<accession>A0A0N7F297</accession>
<evidence type="ECO:0000250" key="1">
    <source>
        <dbReference type="UniProtKB" id="Q96242"/>
    </source>
</evidence>
<evidence type="ECO:0000255" key="2"/>
<evidence type="ECO:0000269" key="3">
    <source>
    </source>
</evidence>
<evidence type="ECO:0000303" key="4">
    <source>
    </source>
</evidence>
<evidence type="ECO:0000305" key="5"/>
<evidence type="ECO:0000305" key="6">
    <source>
    </source>
</evidence>